<feature type="chain" id="PRO_0000389431" description="Neurofibromin-A">
    <location>
        <begin position="1"/>
        <end position="920"/>
    </location>
</feature>
<feature type="domain" description="Ras-GAP" evidence="2">
    <location>
        <begin position="63"/>
        <end position="291"/>
    </location>
</feature>
<feature type="domain" description="CRAL-TRIO" evidence="1">
    <location>
        <begin position="512"/>
        <end position="673"/>
    </location>
</feature>
<feature type="region of interest" description="Disordered" evidence="3">
    <location>
        <begin position="344"/>
        <end position="405"/>
    </location>
</feature>
<feature type="region of interest" description="Disordered" evidence="3">
    <location>
        <begin position="477"/>
        <end position="508"/>
    </location>
</feature>
<feature type="compositionally biased region" description="Polar residues" evidence="3">
    <location>
        <begin position="346"/>
        <end position="369"/>
    </location>
</feature>
<feature type="compositionally biased region" description="Low complexity" evidence="3">
    <location>
        <begin position="370"/>
        <end position="405"/>
    </location>
</feature>
<feature type="compositionally biased region" description="Polar residues" evidence="3">
    <location>
        <begin position="498"/>
        <end position="507"/>
    </location>
</feature>
<feature type="site" description="Arginine finger; crucial for GTP hydrolysis by stabilizing the transition state" evidence="2">
    <location>
        <position position="91"/>
    </location>
</feature>
<gene>
    <name type="primary">nfaA</name>
    <name type="ORF">DDB_G0271750</name>
</gene>
<sequence length="920" mass="103972">MDVDKQMLQWRKRAWLNSNQLYGELTDIIIKDTGFTSSFANLIDNSEVDSFSKNIVNIFTTANKTLPLIKDLIYNEFNTKVLAEGEGSILRGNSIVNKIEGAYVRLIGANYLRFVLSDLVTKVVLDSDLKLEIDPRKLNDYYEDKIEFEKKVAEVELRDNQKSLHNIAQQFLDRITDPSVVVEMPREIRAIADYTAESALRYAPESLAPLVGGFIMLRFFSPAIVTPEYSKLLSSEVAPSKRAKRNLVLLAKVLQNASNGVLFGGKEEFMTCMNDFIIGNKEKMSAYFNLICKDPLNQNNKWSDLEGVKSATTTTTILTPTNTTTSSNGSGGTTWAKPIVGGSKWLATTPSGNTPSPAISNASSAHNGKSNNTTNNNNNNNNNNNNNNNNNNNNNNNSNKTTTTATTISSNSWDVYIKNVQIQDLFDLHRIFDSYKEKIVNKIINTNNNNANNANNNNTNNINNKTAIRVIEILKELGPSPKTKTERKKKETDAAEEPTTSLQNGASMGSAFDECTHMLERSRFLFQGPNDKNDRSVFYLIVNRVKPEVFDNVNPLIAHIFKVMDICVNSPYTLVVDMSWAHISNDLKKAIFTHLPKLAEIFSRKYKKNIDKIFIVHPSAYTRAVIYFMSAFTSRKLKRKIHDIYNWKDLSQYIDIENIALPETSKDFITKSYRVVKVNSKGKRQERLIKFTSNSLLNIDPKTHRIQNEKRINEIDEITSRLGSIEINMKLSGESKKSGSILGTKIGFLSINNNNNNNNDDSNGNHDINESNSRKYICNHELERDHILQDIFETGFKMGLQSKSTKSLPTEYKVIKVNNVGKHQERIFKLTIDSLLNLDQQRIKSENSFAGIEEVILDPHDDDIVWLKFKSEPSRRKIICTVKGEGKLLLEVLTDAINKYQTTIDIQEGALKLDAEEGFL</sequence>
<evidence type="ECO:0000255" key="1">
    <source>
        <dbReference type="PROSITE-ProRule" id="PRU00056"/>
    </source>
</evidence>
<evidence type="ECO:0000255" key="2">
    <source>
        <dbReference type="PROSITE-ProRule" id="PRU00167"/>
    </source>
</evidence>
<evidence type="ECO:0000256" key="3">
    <source>
        <dbReference type="SAM" id="MobiDB-lite"/>
    </source>
</evidence>
<evidence type="ECO:0000269" key="4">
    <source>
    </source>
</evidence>
<keyword id="KW-0343">GTPase activation</keyword>
<keyword id="KW-1185">Reference proteome</keyword>
<protein>
    <recommendedName>
        <fullName>Neurofibromin-A</fullName>
        <shortName>DdNF1</shortName>
    </recommendedName>
</protein>
<name>NFAA_DICDI</name>
<dbReference type="EMBL" id="AAFI02000006">
    <property type="protein sequence ID" value="EAL71565.1"/>
    <property type="molecule type" value="Genomic_DNA"/>
</dbReference>
<dbReference type="RefSeq" id="XP_645456.1">
    <property type="nucleotide sequence ID" value="XM_640364.1"/>
</dbReference>
<dbReference type="SMR" id="Q55AR6"/>
<dbReference type="STRING" id="44689.Q55AR6"/>
<dbReference type="PaxDb" id="44689-DDB0233763"/>
<dbReference type="EnsemblProtists" id="EAL71565">
    <property type="protein sequence ID" value="EAL71565"/>
    <property type="gene ID" value="DDB_G0271750"/>
</dbReference>
<dbReference type="GeneID" id="8618084"/>
<dbReference type="KEGG" id="ddi:DDB_G0271750"/>
<dbReference type="dictyBase" id="DDB_G0271750">
    <property type="gene designation" value="nfaA"/>
</dbReference>
<dbReference type="VEuPathDB" id="AmoebaDB:DDB_G0271750"/>
<dbReference type="eggNOG" id="KOG1826">
    <property type="taxonomic scope" value="Eukaryota"/>
</dbReference>
<dbReference type="HOGENOM" id="CLU_316988_0_0_1"/>
<dbReference type="InParanoid" id="Q55AR6"/>
<dbReference type="OMA" id="KDLIYNE"/>
<dbReference type="Reactome" id="R-DDI-5658442">
    <property type="pathway name" value="Regulation of RAS by GAPs"/>
</dbReference>
<dbReference type="PRO" id="PR:Q55AR6"/>
<dbReference type="Proteomes" id="UP000002195">
    <property type="component" value="Chromosome 2"/>
</dbReference>
<dbReference type="GO" id="GO:0009898">
    <property type="term" value="C:cytoplasmic side of plasma membrane"/>
    <property type="evidence" value="ECO:0000314"/>
    <property type="project" value="dictyBase"/>
</dbReference>
<dbReference type="GO" id="GO:0005096">
    <property type="term" value="F:GTPase activator activity"/>
    <property type="evidence" value="ECO:0000315"/>
    <property type="project" value="dictyBase"/>
</dbReference>
<dbReference type="GO" id="GO:0033058">
    <property type="term" value="P:directional locomotion"/>
    <property type="evidence" value="ECO:0000315"/>
    <property type="project" value="dictyBase"/>
</dbReference>
<dbReference type="GO" id="GO:0030833">
    <property type="term" value="P:regulation of actin filament polymerization"/>
    <property type="evidence" value="ECO:0000315"/>
    <property type="project" value="dictyBase"/>
</dbReference>
<dbReference type="GO" id="GO:0050920">
    <property type="term" value="P:regulation of chemotaxis"/>
    <property type="evidence" value="ECO:0000315"/>
    <property type="project" value="dictyBase"/>
</dbReference>
<dbReference type="GO" id="GO:0051896">
    <property type="term" value="P:regulation of phosphatidylinositol 3-kinase/protein kinase B signal transduction"/>
    <property type="evidence" value="ECO:0000315"/>
    <property type="project" value="dictyBase"/>
</dbReference>
<dbReference type="GO" id="GO:0046578">
    <property type="term" value="P:regulation of Ras protein signal transduction"/>
    <property type="evidence" value="ECO:0000315"/>
    <property type="project" value="dictyBase"/>
</dbReference>
<dbReference type="CDD" id="cd00170">
    <property type="entry name" value="SEC14"/>
    <property type="match status" value="1"/>
</dbReference>
<dbReference type="Gene3D" id="3.40.525.10">
    <property type="entry name" value="CRAL-TRIO lipid binding domain"/>
    <property type="match status" value="1"/>
</dbReference>
<dbReference type="Gene3D" id="1.10.506.10">
    <property type="entry name" value="GTPase Activation - p120gap, domain 1"/>
    <property type="match status" value="1"/>
</dbReference>
<dbReference type="InterPro" id="IPR001251">
    <property type="entry name" value="CRAL-TRIO_dom"/>
</dbReference>
<dbReference type="InterPro" id="IPR036865">
    <property type="entry name" value="CRAL-TRIO_dom_sf"/>
</dbReference>
<dbReference type="InterPro" id="IPR039360">
    <property type="entry name" value="Ras_GTPase"/>
</dbReference>
<dbReference type="InterPro" id="IPR001936">
    <property type="entry name" value="RasGAP_dom"/>
</dbReference>
<dbReference type="InterPro" id="IPR008936">
    <property type="entry name" value="Rho_GTPase_activation_prot"/>
</dbReference>
<dbReference type="PANTHER" id="PTHR10194:SF151">
    <property type="entry name" value="NEUROFIBROMIN-A"/>
    <property type="match status" value="1"/>
</dbReference>
<dbReference type="PANTHER" id="PTHR10194">
    <property type="entry name" value="RAS GTPASE-ACTIVATING PROTEINS"/>
    <property type="match status" value="1"/>
</dbReference>
<dbReference type="Pfam" id="PF13716">
    <property type="entry name" value="CRAL_TRIO_2"/>
    <property type="match status" value="1"/>
</dbReference>
<dbReference type="Pfam" id="PF00616">
    <property type="entry name" value="RasGAP"/>
    <property type="match status" value="1"/>
</dbReference>
<dbReference type="SMART" id="SM00323">
    <property type="entry name" value="RasGAP"/>
    <property type="match status" value="1"/>
</dbReference>
<dbReference type="SUPFAM" id="SSF52087">
    <property type="entry name" value="CRAL/TRIO domain"/>
    <property type="match status" value="1"/>
</dbReference>
<dbReference type="SUPFAM" id="SSF48350">
    <property type="entry name" value="GTPase activation domain, GAP"/>
    <property type="match status" value="1"/>
</dbReference>
<dbReference type="PROSITE" id="PS50191">
    <property type="entry name" value="CRAL_TRIO"/>
    <property type="match status" value="1"/>
</dbReference>
<dbReference type="PROSITE" id="PS50018">
    <property type="entry name" value="RAS_GTPASE_ACTIV_2"/>
    <property type="match status" value="1"/>
</dbReference>
<comment type="function">
    <text evidence="4">Regulator of the GTPase activity of Ras, mainly RasG and RasB.</text>
</comment>
<comment type="disruption phenotype">
    <text evidence="4">Show spatially and temporally unregulated Ras activity causing cytokinesis and chemotaxis defects.</text>
</comment>
<proteinExistence type="predicted"/>
<reference key="1">
    <citation type="journal article" date="2002" name="Nature">
        <title>Sequence and analysis of chromosome 2 of Dictyostelium discoideum.</title>
        <authorList>
            <person name="Gloeckner G."/>
            <person name="Eichinger L."/>
            <person name="Szafranski K."/>
            <person name="Pachebat J.A."/>
            <person name="Bankier A.T."/>
            <person name="Dear P.H."/>
            <person name="Lehmann R."/>
            <person name="Baumgart C."/>
            <person name="Parra G."/>
            <person name="Abril J.F."/>
            <person name="Guigo R."/>
            <person name="Kumpf K."/>
            <person name="Tunggal B."/>
            <person name="Cox E.C."/>
            <person name="Quail M.A."/>
            <person name="Platzer M."/>
            <person name="Rosenthal A."/>
            <person name="Noegel A.A."/>
        </authorList>
    </citation>
    <scope>NUCLEOTIDE SEQUENCE [LARGE SCALE GENOMIC DNA]</scope>
    <source>
        <strain>AX4</strain>
    </source>
</reference>
<reference key="2">
    <citation type="journal article" date="2005" name="Nature">
        <title>The genome of the social amoeba Dictyostelium discoideum.</title>
        <authorList>
            <person name="Eichinger L."/>
            <person name="Pachebat J.A."/>
            <person name="Gloeckner G."/>
            <person name="Rajandream M.A."/>
            <person name="Sucgang R."/>
            <person name="Berriman M."/>
            <person name="Song J."/>
            <person name="Olsen R."/>
            <person name="Szafranski K."/>
            <person name="Xu Q."/>
            <person name="Tunggal B."/>
            <person name="Kummerfeld S."/>
            <person name="Madera M."/>
            <person name="Konfortov B.A."/>
            <person name="Rivero F."/>
            <person name="Bankier A.T."/>
            <person name="Lehmann R."/>
            <person name="Hamlin N."/>
            <person name="Davies R."/>
            <person name="Gaudet P."/>
            <person name="Fey P."/>
            <person name="Pilcher K."/>
            <person name="Chen G."/>
            <person name="Saunders D."/>
            <person name="Sodergren E.J."/>
            <person name="Davis P."/>
            <person name="Kerhornou A."/>
            <person name="Nie X."/>
            <person name="Hall N."/>
            <person name="Anjard C."/>
            <person name="Hemphill L."/>
            <person name="Bason N."/>
            <person name="Farbrother P."/>
            <person name="Desany B."/>
            <person name="Just E."/>
            <person name="Morio T."/>
            <person name="Rost R."/>
            <person name="Churcher C.M."/>
            <person name="Cooper J."/>
            <person name="Haydock S."/>
            <person name="van Driessche N."/>
            <person name="Cronin A."/>
            <person name="Goodhead I."/>
            <person name="Muzny D.M."/>
            <person name="Mourier T."/>
            <person name="Pain A."/>
            <person name="Lu M."/>
            <person name="Harper D."/>
            <person name="Lindsay R."/>
            <person name="Hauser H."/>
            <person name="James K.D."/>
            <person name="Quiles M."/>
            <person name="Madan Babu M."/>
            <person name="Saito T."/>
            <person name="Buchrieser C."/>
            <person name="Wardroper A."/>
            <person name="Felder M."/>
            <person name="Thangavelu M."/>
            <person name="Johnson D."/>
            <person name="Knights A."/>
            <person name="Loulseged H."/>
            <person name="Mungall K.L."/>
            <person name="Oliver K."/>
            <person name="Price C."/>
            <person name="Quail M.A."/>
            <person name="Urushihara H."/>
            <person name="Hernandez J."/>
            <person name="Rabbinowitsch E."/>
            <person name="Steffen D."/>
            <person name="Sanders M."/>
            <person name="Ma J."/>
            <person name="Kohara Y."/>
            <person name="Sharp S."/>
            <person name="Simmonds M.N."/>
            <person name="Spiegler S."/>
            <person name="Tivey A."/>
            <person name="Sugano S."/>
            <person name="White B."/>
            <person name="Walker D."/>
            <person name="Woodward J.R."/>
            <person name="Winckler T."/>
            <person name="Tanaka Y."/>
            <person name="Shaulsky G."/>
            <person name="Schleicher M."/>
            <person name="Weinstock G.M."/>
            <person name="Rosenthal A."/>
            <person name="Cox E.C."/>
            <person name="Chisholm R.L."/>
            <person name="Gibbs R.A."/>
            <person name="Loomis W.F."/>
            <person name="Platzer M."/>
            <person name="Kay R.R."/>
            <person name="Williams J.G."/>
            <person name="Dear P.H."/>
            <person name="Noegel A.A."/>
            <person name="Barrell B.G."/>
            <person name="Kuspa A."/>
        </authorList>
    </citation>
    <scope>NUCLEOTIDE SEQUENCE [LARGE SCALE GENOMIC DNA]</scope>
    <source>
        <strain>AX4</strain>
    </source>
</reference>
<reference key="3">
    <citation type="journal article" date="2008" name="Curr. Biol.">
        <title>Spatiotemporal regulation of Ras activity provides directional sensing.</title>
        <authorList>
            <person name="Zhang S."/>
            <person name="Charest P.G."/>
            <person name="Firtel R.A."/>
        </authorList>
    </citation>
    <scope>FUNCTION</scope>
    <scope>DISRUPTION PHENOTYPE</scope>
</reference>
<accession>Q55AR6</accession>
<organism>
    <name type="scientific">Dictyostelium discoideum</name>
    <name type="common">Social amoeba</name>
    <dbReference type="NCBI Taxonomy" id="44689"/>
    <lineage>
        <taxon>Eukaryota</taxon>
        <taxon>Amoebozoa</taxon>
        <taxon>Evosea</taxon>
        <taxon>Eumycetozoa</taxon>
        <taxon>Dictyostelia</taxon>
        <taxon>Dictyosteliales</taxon>
        <taxon>Dictyosteliaceae</taxon>
        <taxon>Dictyostelium</taxon>
    </lineage>
</organism>